<accession>A1WWC6</accession>
<feature type="chain" id="PRO_1000062479" description="Protein-export protein SecB">
    <location>
        <begin position="1"/>
        <end position="173"/>
    </location>
</feature>
<feature type="region of interest" description="Disordered" evidence="2">
    <location>
        <begin position="148"/>
        <end position="173"/>
    </location>
</feature>
<feature type="compositionally biased region" description="Polar residues" evidence="2">
    <location>
        <begin position="158"/>
        <end position="167"/>
    </location>
</feature>
<reference key="1">
    <citation type="submission" date="2006-12" db="EMBL/GenBank/DDBJ databases">
        <title>Complete sequence of Halorhodospira halophila SL1.</title>
        <authorList>
            <consortium name="US DOE Joint Genome Institute"/>
            <person name="Copeland A."/>
            <person name="Lucas S."/>
            <person name="Lapidus A."/>
            <person name="Barry K."/>
            <person name="Detter J.C."/>
            <person name="Glavina del Rio T."/>
            <person name="Hammon N."/>
            <person name="Israni S."/>
            <person name="Dalin E."/>
            <person name="Tice H."/>
            <person name="Pitluck S."/>
            <person name="Saunders E."/>
            <person name="Brettin T."/>
            <person name="Bruce D."/>
            <person name="Han C."/>
            <person name="Tapia R."/>
            <person name="Schmutz J."/>
            <person name="Larimer F."/>
            <person name="Land M."/>
            <person name="Hauser L."/>
            <person name="Kyrpides N."/>
            <person name="Mikhailova N."/>
            <person name="Hoff W."/>
            <person name="Richardson P."/>
        </authorList>
    </citation>
    <scope>NUCLEOTIDE SEQUENCE [LARGE SCALE GENOMIC DNA]</scope>
    <source>
        <strain>DSM 244 / SL1</strain>
    </source>
</reference>
<dbReference type="EMBL" id="CP000544">
    <property type="protein sequence ID" value="ABM61988.1"/>
    <property type="molecule type" value="Genomic_DNA"/>
</dbReference>
<dbReference type="RefSeq" id="WP_011814011.1">
    <property type="nucleotide sequence ID" value="NC_008789.1"/>
</dbReference>
<dbReference type="SMR" id="A1WWC6"/>
<dbReference type="STRING" id="349124.Hhal_1213"/>
<dbReference type="KEGG" id="hha:Hhal_1213"/>
<dbReference type="eggNOG" id="COG1952">
    <property type="taxonomic scope" value="Bacteria"/>
</dbReference>
<dbReference type="HOGENOM" id="CLU_111574_1_0_6"/>
<dbReference type="OrthoDB" id="9795145at2"/>
<dbReference type="Proteomes" id="UP000000647">
    <property type="component" value="Chromosome"/>
</dbReference>
<dbReference type="GO" id="GO:0005737">
    <property type="term" value="C:cytoplasm"/>
    <property type="evidence" value="ECO:0007669"/>
    <property type="project" value="UniProtKB-SubCell"/>
</dbReference>
<dbReference type="GO" id="GO:0051082">
    <property type="term" value="F:unfolded protein binding"/>
    <property type="evidence" value="ECO:0007669"/>
    <property type="project" value="InterPro"/>
</dbReference>
<dbReference type="GO" id="GO:0006457">
    <property type="term" value="P:protein folding"/>
    <property type="evidence" value="ECO:0007669"/>
    <property type="project" value="UniProtKB-UniRule"/>
</dbReference>
<dbReference type="GO" id="GO:0051262">
    <property type="term" value="P:protein tetramerization"/>
    <property type="evidence" value="ECO:0007669"/>
    <property type="project" value="InterPro"/>
</dbReference>
<dbReference type="GO" id="GO:0015031">
    <property type="term" value="P:protein transport"/>
    <property type="evidence" value="ECO:0007669"/>
    <property type="project" value="UniProtKB-UniRule"/>
</dbReference>
<dbReference type="Gene3D" id="3.10.420.10">
    <property type="entry name" value="SecB-like"/>
    <property type="match status" value="1"/>
</dbReference>
<dbReference type="HAMAP" id="MF_00821">
    <property type="entry name" value="SecB"/>
    <property type="match status" value="1"/>
</dbReference>
<dbReference type="InterPro" id="IPR003708">
    <property type="entry name" value="SecB"/>
</dbReference>
<dbReference type="InterPro" id="IPR035958">
    <property type="entry name" value="SecB-like_sf"/>
</dbReference>
<dbReference type="NCBIfam" id="NF004393">
    <property type="entry name" value="PRK05751.1-4"/>
    <property type="match status" value="1"/>
</dbReference>
<dbReference type="NCBIfam" id="TIGR00809">
    <property type="entry name" value="secB"/>
    <property type="match status" value="1"/>
</dbReference>
<dbReference type="PANTHER" id="PTHR36918">
    <property type="match status" value="1"/>
</dbReference>
<dbReference type="PANTHER" id="PTHR36918:SF1">
    <property type="entry name" value="PROTEIN-EXPORT PROTEIN SECB"/>
    <property type="match status" value="1"/>
</dbReference>
<dbReference type="Pfam" id="PF02556">
    <property type="entry name" value="SecB"/>
    <property type="match status" value="1"/>
</dbReference>
<dbReference type="PRINTS" id="PR01594">
    <property type="entry name" value="SECBCHAPRONE"/>
</dbReference>
<dbReference type="SUPFAM" id="SSF54611">
    <property type="entry name" value="SecB-like"/>
    <property type="match status" value="1"/>
</dbReference>
<keyword id="KW-0143">Chaperone</keyword>
<keyword id="KW-0963">Cytoplasm</keyword>
<keyword id="KW-0653">Protein transport</keyword>
<keyword id="KW-1185">Reference proteome</keyword>
<keyword id="KW-0811">Translocation</keyword>
<keyword id="KW-0813">Transport</keyword>
<gene>
    <name evidence="1" type="primary">secB</name>
    <name type="ordered locus">Hhal_1213</name>
</gene>
<comment type="function">
    <text evidence="1">One of the proteins required for the normal export of preproteins out of the cell cytoplasm. It is a molecular chaperone that binds to a subset of precursor proteins, maintaining them in a translocation-competent state. It also specifically binds to its receptor SecA.</text>
</comment>
<comment type="subunit">
    <text evidence="1">Homotetramer, a dimer of dimers. One homotetramer interacts with 1 SecA dimer.</text>
</comment>
<comment type="subcellular location">
    <subcellularLocation>
        <location evidence="1">Cytoplasm</location>
    </subcellularLocation>
</comment>
<comment type="similarity">
    <text evidence="1">Belongs to the SecB family.</text>
</comment>
<organism>
    <name type="scientific">Halorhodospira halophila (strain DSM 244 / SL1)</name>
    <name type="common">Ectothiorhodospira halophila (strain DSM 244 / SL1)</name>
    <dbReference type="NCBI Taxonomy" id="349124"/>
    <lineage>
        <taxon>Bacteria</taxon>
        <taxon>Pseudomonadati</taxon>
        <taxon>Pseudomonadota</taxon>
        <taxon>Gammaproteobacteria</taxon>
        <taxon>Chromatiales</taxon>
        <taxon>Ectothiorhodospiraceae</taxon>
        <taxon>Halorhodospira</taxon>
    </lineage>
</organism>
<sequence length="173" mass="19144">MAENNGNGSTGAADTGQRQRFQIAKMYLRDVSFEAPGAPEAFRDEWKPQMDVELGTRHQPLGENTYDVVLTITVTARNNERTAYLCEVKQGGVFRLEGFPEADMERVLGAYCPAQLFPFAREAINDLVVKGGFPQLLLAPVNFESLYQQQKQRREQGTSDSAPSGSPDNGGRQ</sequence>
<proteinExistence type="inferred from homology"/>
<name>SECB_HALHL</name>
<protein>
    <recommendedName>
        <fullName evidence="1">Protein-export protein SecB</fullName>
    </recommendedName>
</protein>
<evidence type="ECO:0000255" key="1">
    <source>
        <dbReference type="HAMAP-Rule" id="MF_00821"/>
    </source>
</evidence>
<evidence type="ECO:0000256" key="2">
    <source>
        <dbReference type="SAM" id="MobiDB-lite"/>
    </source>
</evidence>